<reference key="1">
    <citation type="submission" date="2005-07" db="EMBL/GenBank/DDBJ databases">
        <title>Complete sequence of Synechococcus sp. CC9605.</title>
        <authorList>
            <consortium name="US DOE Joint Genome Institute"/>
            <person name="Copeland A."/>
            <person name="Lucas S."/>
            <person name="Lapidus A."/>
            <person name="Barry K."/>
            <person name="Detter J.C."/>
            <person name="Glavina T."/>
            <person name="Hammon N."/>
            <person name="Israni S."/>
            <person name="Pitluck S."/>
            <person name="Schmutz J."/>
            <person name="Martinez M."/>
            <person name="Larimer F."/>
            <person name="Land M."/>
            <person name="Kyrpides N."/>
            <person name="Ivanova N."/>
            <person name="Richardson P."/>
        </authorList>
    </citation>
    <scope>NUCLEOTIDE SEQUENCE [LARGE SCALE GENOMIC DNA]</scope>
    <source>
        <strain>CC9605</strain>
    </source>
</reference>
<evidence type="ECO:0000255" key="1">
    <source>
        <dbReference type="HAMAP-Rule" id="MF_02007"/>
    </source>
</evidence>
<organism>
    <name type="scientific">Synechococcus sp. (strain CC9605)</name>
    <dbReference type="NCBI Taxonomy" id="110662"/>
    <lineage>
        <taxon>Bacteria</taxon>
        <taxon>Bacillati</taxon>
        <taxon>Cyanobacteriota</taxon>
        <taxon>Cyanophyceae</taxon>
        <taxon>Synechococcales</taxon>
        <taxon>Synechococcaceae</taxon>
        <taxon>Synechococcus</taxon>
    </lineage>
</organism>
<feature type="chain" id="PRO_0000236764" description="Tyrosine--tRNA ligase">
    <location>
        <begin position="1"/>
        <end position="415"/>
    </location>
</feature>
<feature type="domain" description="S4 RNA-binding" evidence="1">
    <location>
        <begin position="351"/>
        <end position="414"/>
    </location>
</feature>
<feature type="short sequence motif" description="'HIGH' region">
    <location>
        <begin position="54"/>
        <end position="63"/>
    </location>
</feature>
<feature type="short sequence motif" description="'KMSKS' region">
    <location>
        <begin position="248"/>
        <end position="252"/>
    </location>
</feature>
<feature type="binding site" evidence="1">
    <location>
        <position position="251"/>
    </location>
    <ligand>
        <name>ATP</name>
        <dbReference type="ChEBI" id="CHEBI:30616"/>
    </ligand>
</feature>
<proteinExistence type="inferred from homology"/>
<name>SYY_SYNSC</name>
<protein>
    <recommendedName>
        <fullName evidence="1">Tyrosine--tRNA ligase</fullName>
        <ecNumber evidence="1">6.1.1.1</ecNumber>
    </recommendedName>
    <alternativeName>
        <fullName evidence="1">Tyrosyl-tRNA synthetase</fullName>
        <shortName evidence="1">TyrRS</shortName>
    </alternativeName>
</protein>
<keyword id="KW-0030">Aminoacyl-tRNA synthetase</keyword>
<keyword id="KW-0067">ATP-binding</keyword>
<keyword id="KW-0963">Cytoplasm</keyword>
<keyword id="KW-0436">Ligase</keyword>
<keyword id="KW-0547">Nucleotide-binding</keyword>
<keyword id="KW-0648">Protein biosynthesis</keyword>
<keyword id="KW-0694">RNA-binding</keyword>
<dbReference type="EC" id="6.1.1.1" evidence="1"/>
<dbReference type="EMBL" id="CP000110">
    <property type="protein sequence ID" value="ABB35842.1"/>
    <property type="molecule type" value="Genomic_DNA"/>
</dbReference>
<dbReference type="RefSeq" id="WP_011365050.1">
    <property type="nucleotide sequence ID" value="NC_007516.1"/>
</dbReference>
<dbReference type="SMR" id="Q3AHU0"/>
<dbReference type="STRING" id="110662.Syncc9605_2102"/>
<dbReference type="KEGG" id="syd:Syncc9605_2102"/>
<dbReference type="eggNOG" id="COG0162">
    <property type="taxonomic scope" value="Bacteria"/>
</dbReference>
<dbReference type="HOGENOM" id="CLU_024003_5_0_3"/>
<dbReference type="OrthoDB" id="9804243at2"/>
<dbReference type="GO" id="GO:0005829">
    <property type="term" value="C:cytosol"/>
    <property type="evidence" value="ECO:0007669"/>
    <property type="project" value="TreeGrafter"/>
</dbReference>
<dbReference type="GO" id="GO:0005524">
    <property type="term" value="F:ATP binding"/>
    <property type="evidence" value="ECO:0007669"/>
    <property type="project" value="UniProtKB-UniRule"/>
</dbReference>
<dbReference type="GO" id="GO:0003723">
    <property type="term" value="F:RNA binding"/>
    <property type="evidence" value="ECO:0007669"/>
    <property type="project" value="UniProtKB-KW"/>
</dbReference>
<dbReference type="GO" id="GO:0004831">
    <property type="term" value="F:tyrosine-tRNA ligase activity"/>
    <property type="evidence" value="ECO:0007669"/>
    <property type="project" value="UniProtKB-UniRule"/>
</dbReference>
<dbReference type="GO" id="GO:0006437">
    <property type="term" value="P:tyrosyl-tRNA aminoacylation"/>
    <property type="evidence" value="ECO:0007669"/>
    <property type="project" value="UniProtKB-UniRule"/>
</dbReference>
<dbReference type="CDD" id="cd00805">
    <property type="entry name" value="TyrRS_core"/>
    <property type="match status" value="1"/>
</dbReference>
<dbReference type="Gene3D" id="3.40.50.620">
    <property type="entry name" value="HUPs"/>
    <property type="match status" value="1"/>
</dbReference>
<dbReference type="Gene3D" id="3.10.290.10">
    <property type="entry name" value="RNA-binding S4 domain"/>
    <property type="match status" value="1"/>
</dbReference>
<dbReference type="Gene3D" id="1.10.240.10">
    <property type="entry name" value="Tyrosyl-Transfer RNA Synthetase"/>
    <property type="match status" value="1"/>
</dbReference>
<dbReference type="HAMAP" id="MF_02007">
    <property type="entry name" value="Tyr_tRNA_synth_type2"/>
    <property type="match status" value="1"/>
</dbReference>
<dbReference type="InterPro" id="IPR002305">
    <property type="entry name" value="aa-tRNA-synth_Ic"/>
</dbReference>
<dbReference type="InterPro" id="IPR014729">
    <property type="entry name" value="Rossmann-like_a/b/a_fold"/>
</dbReference>
<dbReference type="InterPro" id="IPR036986">
    <property type="entry name" value="S4_RNA-bd_sf"/>
</dbReference>
<dbReference type="InterPro" id="IPR054608">
    <property type="entry name" value="SYY-like_C"/>
</dbReference>
<dbReference type="InterPro" id="IPR002307">
    <property type="entry name" value="Tyr-tRNA-ligase"/>
</dbReference>
<dbReference type="InterPro" id="IPR024088">
    <property type="entry name" value="Tyr-tRNA-ligase_bac-type"/>
</dbReference>
<dbReference type="InterPro" id="IPR024108">
    <property type="entry name" value="Tyr-tRNA-ligase_bac_2"/>
</dbReference>
<dbReference type="NCBIfam" id="TIGR00234">
    <property type="entry name" value="tyrS"/>
    <property type="match status" value="1"/>
</dbReference>
<dbReference type="PANTHER" id="PTHR11766:SF1">
    <property type="entry name" value="TYROSINE--TRNA LIGASE"/>
    <property type="match status" value="1"/>
</dbReference>
<dbReference type="PANTHER" id="PTHR11766">
    <property type="entry name" value="TYROSYL-TRNA SYNTHETASE"/>
    <property type="match status" value="1"/>
</dbReference>
<dbReference type="Pfam" id="PF22421">
    <property type="entry name" value="SYY_C-terminal"/>
    <property type="match status" value="1"/>
</dbReference>
<dbReference type="Pfam" id="PF00579">
    <property type="entry name" value="tRNA-synt_1b"/>
    <property type="match status" value="1"/>
</dbReference>
<dbReference type="PRINTS" id="PR01040">
    <property type="entry name" value="TRNASYNTHTYR"/>
</dbReference>
<dbReference type="SUPFAM" id="SSF55174">
    <property type="entry name" value="Alpha-L RNA-binding motif"/>
    <property type="match status" value="1"/>
</dbReference>
<dbReference type="SUPFAM" id="SSF52374">
    <property type="entry name" value="Nucleotidylyl transferase"/>
    <property type="match status" value="1"/>
</dbReference>
<dbReference type="PROSITE" id="PS50889">
    <property type="entry name" value="S4"/>
    <property type="match status" value="1"/>
</dbReference>
<accession>Q3AHU0</accession>
<sequence>MPDSIPSLPDWLSRGMADLFPAGDPSDADQALAARLAQAEKEGRPLRVKLGIDPTGSNIHLGHSILFRKLRAFQDGGHTAVLIIGDFTARIGDPTGKSATRVQLSKEQVAANASTYLRQLGQDQPKETALLDFETPGRLEVRYNSEWLEGMDLPAVIGLLGTGTVGQMLAKDDFSKRYGSGTPIALHEFLYPLLQGYDSVAVNADVELGGTDQKFNVAMGRDLQRHFNKGTQFGLLLPILVGLDGVQKMSKSLGNVVGLEEDPLSMYSKLEKVGDAAIDDYVTLLTDLDLASLPDNPREKQKAMALAVTASRHGIEAAQKAQSDAATLVGGSGDAGADVPEASLAEVNFPAKAFYLFSAVGICASSSEARRQIKGGAARLEGEKITDPNQEFTSAAELEGKVLQLGKKTFRRLVA</sequence>
<gene>
    <name evidence="1" type="primary">tyrS</name>
    <name type="ordered locus">Syncc9605_2102</name>
</gene>
<comment type="function">
    <text evidence="1">Catalyzes the attachment of tyrosine to tRNA(Tyr) in a two-step reaction: tyrosine is first activated by ATP to form Tyr-AMP and then transferred to the acceptor end of tRNA(Tyr).</text>
</comment>
<comment type="catalytic activity">
    <reaction evidence="1">
        <text>tRNA(Tyr) + L-tyrosine + ATP = L-tyrosyl-tRNA(Tyr) + AMP + diphosphate + H(+)</text>
        <dbReference type="Rhea" id="RHEA:10220"/>
        <dbReference type="Rhea" id="RHEA-COMP:9706"/>
        <dbReference type="Rhea" id="RHEA-COMP:9707"/>
        <dbReference type="ChEBI" id="CHEBI:15378"/>
        <dbReference type="ChEBI" id="CHEBI:30616"/>
        <dbReference type="ChEBI" id="CHEBI:33019"/>
        <dbReference type="ChEBI" id="CHEBI:58315"/>
        <dbReference type="ChEBI" id="CHEBI:78442"/>
        <dbReference type="ChEBI" id="CHEBI:78536"/>
        <dbReference type="ChEBI" id="CHEBI:456215"/>
        <dbReference type="EC" id="6.1.1.1"/>
    </reaction>
</comment>
<comment type="subunit">
    <text evidence="1">Homodimer.</text>
</comment>
<comment type="subcellular location">
    <subcellularLocation>
        <location evidence="1">Cytoplasm</location>
    </subcellularLocation>
</comment>
<comment type="similarity">
    <text evidence="1">Belongs to the class-I aminoacyl-tRNA synthetase family. TyrS type 2 subfamily.</text>
</comment>